<feature type="chain" id="PRO_0000333111" description="Na(+)/H(+) antiporter NhaB">
    <location>
        <begin position="1"/>
        <end position="500"/>
    </location>
</feature>
<feature type="transmembrane region" description="Helical" evidence="1">
    <location>
        <begin position="28"/>
        <end position="50"/>
    </location>
</feature>
<feature type="transmembrane region" description="Helical" evidence="1">
    <location>
        <begin position="58"/>
        <end position="78"/>
    </location>
</feature>
<feature type="transmembrane region" description="Helical" evidence="1">
    <location>
        <begin position="96"/>
        <end position="116"/>
    </location>
</feature>
<feature type="transmembrane region" description="Helical" evidence="1">
    <location>
        <begin position="129"/>
        <end position="149"/>
    </location>
</feature>
<feature type="transmembrane region" description="Helical" evidence="1">
    <location>
        <begin position="150"/>
        <end position="170"/>
    </location>
</feature>
<feature type="transmembrane region" description="Helical" evidence="1">
    <location>
        <begin position="205"/>
        <end position="225"/>
    </location>
</feature>
<feature type="transmembrane region" description="Helical" evidence="1">
    <location>
        <begin position="241"/>
        <end position="261"/>
    </location>
</feature>
<feature type="transmembrane region" description="Helical" evidence="1">
    <location>
        <begin position="311"/>
        <end position="331"/>
    </location>
</feature>
<feature type="transmembrane region" description="Helical" evidence="1">
    <location>
        <begin position="350"/>
        <end position="370"/>
    </location>
</feature>
<feature type="transmembrane region" description="Helical" evidence="1">
    <location>
        <begin position="394"/>
        <end position="414"/>
    </location>
</feature>
<feature type="transmembrane region" description="Helical" evidence="1">
    <location>
        <begin position="449"/>
        <end position="469"/>
    </location>
</feature>
<feature type="transmembrane region" description="Helical" evidence="1">
    <location>
        <begin position="477"/>
        <end position="497"/>
    </location>
</feature>
<name>NHAB_PSEPF</name>
<protein>
    <recommendedName>
        <fullName evidence="1">Na(+)/H(+) antiporter NhaB</fullName>
    </recommendedName>
    <alternativeName>
        <fullName evidence="1">Sodium/proton antiporter NhaB</fullName>
    </alternativeName>
</protein>
<dbReference type="EMBL" id="CP000094">
    <property type="protein sequence ID" value="ABA74330.1"/>
    <property type="molecule type" value="Genomic_DNA"/>
</dbReference>
<dbReference type="RefSeq" id="WP_011334004.1">
    <property type="nucleotide sequence ID" value="NC_007492.2"/>
</dbReference>
<dbReference type="SMR" id="Q3KD25"/>
<dbReference type="KEGG" id="pfo:Pfl01_2589"/>
<dbReference type="eggNOG" id="COG3067">
    <property type="taxonomic scope" value="Bacteria"/>
</dbReference>
<dbReference type="HOGENOM" id="CLU_041110_0_0_6"/>
<dbReference type="Proteomes" id="UP000002704">
    <property type="component" value="Chromosome"/>
</dbReference>
<dbReference type="GO" id="GO:0005886">
    <property type="term" value="C:plasma membrane"/>
    <property type="evidence" value="ECO:0007669"/>
    <property type="project" value="UniProtKB-SubCell"/>
</dbReference>
<dbReference type="GO" id="GO:0015385">
    <property type="term" value="F:sodium:proton antiporter activity"/>
    <property type="evidence" value="ECO:0007669"/>
    <property type="project" value="InterPro"/>
</dbReference>
<dbReference type="HAMAP" id="MF_01599">
    <property type="entry name" value="NhaB"/>
    <property type="match status" value="1"/>
</dbReference>
<dbReference type="InterPro" id="IPR004671">
    <property type="entry name" value="Na+/H+_antiporter_NhaB"/>
</dbReference>
<dbReference type="NCBIfam" id="NF007093">
    <property type="entry name" value="PRK09547.1"/>
    <property type="match status" value="1"/>
</dbReference>
<dbReference type="PANTHER" id="PTHR43302:SF1">
    <property type="entry name" value="NA(+)_H(+) ANTIPORTER NHAB"/>
    <property type="match status" value="1"/>
</dbReference>
<dbReference type="PANTHER" id="PTHR43302">
    <property type="entry name" value="TRANSPORTER ARSB-RELATED"/>
    <property type="match status" value="1"/>
</dbReference>
<dbReference type="Pfam" id="PF06450">
    <property type="entry name" value="NhaB"/>
    <property type="match status" value="1"/>
</dbReference>
<sequence length="500" mass="54795">MSGSMAQAFAHNFLGHSPRWYKACIVGFLMLNALVLWSVGPVAAGWLLVIEFIFTLAMALKCYPLMPGGLLLIEALLLKMTTPQALYEELQHNFPVILLLMFMVAGIYFMKDLLLFLFSRLLLGVRSKALLALMFCFLSAFLSAFLDALTVTAVIISAAVGFYSVYHRVASGNDPRQDSEFSDDQHLPQLHHEDLEQFRAFLRSLLMHGAVGTALGGVCTLVGEPQNLLIGHEMGWHFAEFFLKVAPVSLPVLVAGLVTCLLLEKLRWFGYGTLLPDNVRAVLANYAAEDNAERTPRQRAALLVQGCAALILIAGLAFHIAEVGLIGLMVIVLITAFTGITDEHRLGSAFKDAMPFTALLVVFFAVVAVIHDQQLFAPLIQWVLALPADQQPGMLFIANGLLSAISDNVFVATIYITEVKQAFLSGHMSREHFETLAIAINTGTNLPSVATPNGQAAFLFLLTSAIAPLVRLSYGRMVWMALPYTVVMGLLGWYAVSYWL</sequence>
<keyword id="KW-0050">Antiport</keyword>
<keyword id="KW-0997">Cell inner membrane</keyword>
<keyword id="KW-1003">Cell membrane</keyword>
<keyword id="KW-0406">Ion transport</keyword>
<keyword id="KW-0472">Membrane</keyword>
<keyword id="KW-0915">Sodium</keyword>
<keyword id="KW-0739">Sodium transport</keyword>
<keyword id="KW-0812">Transmembrane</keyword>
<keyword id="KW-1133">Transmembrane helix</keyword>
<keyword id="KW-0813">Transport</keyword>
<proteinExistence type="inferred from homology"/>
<gene>
    <name evidence="1" type="primary">nhaB</name>
    <name type="ordered locus">Pfl01_2589</name>
</gene>
<reference key="1">
    <citation type="journal article" date="2009" name="Genome Biol.">
        <title>Genomic and genetic analyses of diversity and plant interactions of Pseudomonas fluorescens.</title>
        <authorList>
            <person name="Silby M.W."/>
            <person name="Cerdeno-Tarraga A.M."/>
            <person name="Vernikos G.S."/>
            <person name="Giddens S.R."/>
            <person name="Jackson R.W."/>
            <person name="Preston G.M."/>
            <person name="Zhang X.-X."/>
            <person name="Moon C.D."/>
            <person name="Gehrig S.M."/>
            <person name="Godfrey S.A.C."/>
            <person name="Knight C.G."/>
            <person name="Malone J.G."/>
            <person name="Robinson Z."/>
            <person name="Spiers A.J."/>
            <person name="Harris S."/>
            <person name="Challis G.L."/>
            <person name="Yaxley A.M."/>
            <person name="Harris D."/>
            <person name="Seeger K."/>
            <person name="Murphy L."/>
            <person name="Rutter S."/>
            <person name="Squares R."/>
            <person name="Quail M.A."/>
            <person name="Saunders E."/>
            <person name="Mavromatis K."/>
            <person name="Brettin T.S."/>
            <person name="Bentley S.D."/>
            <person name="Hothersall J."/>
            <person name="Stephens E."/>
            <person name="Thomas C.M."/>
            <person name="Parkhill J."/>
            <person name="Levy S.B."/>
            <person name="Rainey P.B."/>
            <person name="Thomson N.R."/>
        </authorList>
    </citation>
    <scope>NUCLEOTIDE SEQUENCE [LARGE SCALE GENOMIC DNA]</scope>
    <source>
        <strain>Pf0-1</strain>
    </source>
</reference>
<evidence type="ECO:0000255" key="1">
    <source>
        <dbReference type="HAMAP-Rule" id="MF_01599"/>
    </source>
</evidence>
<comment type="function">
    <text evidence="1">Na(+)/H(+) antiporter that extrudes sodium in exchange for external protons.</text>
</comment>
<comment type="catalytic activity">
    <reaction evidence="1">
        <text>2 Na(+)(in) + 3 H(+)(out) = 2 Na(+)(out) + 3 H(+)(in)</text>
        <dbReference type="Rhea" id="RHEA:29247"/>
        <dbReference type="ChEBI" id="CHEBI:15378"/>
        <dbReference type="ChEBI" id="CHEBI:29101"/>
    </reaction>
    <physiologicalReaction direction="left-to-right" evidence="1">
        <dbReference type="Rhea" id="RHEA:29248"/>
    </physiologicalReaction>
</comment>
<comment type="subcellular location">
    <subcellularLocation>
        <location evidence="1">Cell inner membrane</location>
        <topology evidence="1">Multi-pass membrane protein</topology>
    </subcellularLocation>
</comment>
<comment type="similarity">
    <text evidence="1">Belongs to the NhaB Na(+)/H(+) (TC 2.A.34) antiporter family.</text>
</comment>
<accession>Q3KD25</accession>
<organism>
    <name type="scientific">Pseudomonas fluorescens (strain Pf0-1)</name>
    <dbReference type="NCBI Taxonomy" id="205922"/>
    <lineage>
        <taxon>Bacteria</taxon>
        <taxon>Pseudomonadati</taxon>
        <taxon>Pseudomonadota</taxon>
        <taxon>Gammaproteobacteria</taxon>
        <taxon>Pseudomonadales</taxon>
        <taxon>Pseudomonadaceae</taxon>
        <taxon>Pseudomonas</taxon>
    </lineage>
</organism>